<reference key="1">
    <citation type="journal article" date="2007" name="PLoS ONE">
        <title>Paradoxical DNA repair and peroxide resistance gene conservation in Bacillus pumilus SAFR-032.</title>
        <authorList>
            <person name="Gioia J."/>
            <person name="Yerrapragada S."/>
            <person name="Qin X."/>
            <person name="Jiang H."/>
            <person name="Igboeli O.C."/>
            <person name="Muzny D."/>
            <person name="Dugan-Rocha S."/>
            <person name="Ding Y."/>
            <person name="Hawes A."/>
            <person name="Liu W."/>
            <person name="Perez L."/>
            <person name="Kovar C."/>
            <person name="Dinh H."/>
            <person name="Lee S."/>
            <person name="Nazareth L."/>
            <person name="Blyth P."/>
            <person name="Holder M."/>
            <person name="Buhay C."/>
            <person name="Tirumalai M.R."/>
            <person name="Liu Y."/>
            <person name="Dasgupta I."/>
            <person name="Bokhetache L."/>
            <person name="Fujita M."/>
            <person name="Karouia F."/>
            <person name="Eswara Moorthy P."/>
            <person name="Siefert J."/>
            <person name="Uzman A."/>
            <person name="Buzumbo P."/>
            <person name="Verma A."/>
            <person name="Zwiya H."/>
            <person name="McWilliams B.D."/>
            <person name="Olowu A."/>
            <person name="Clinkenbeard K.D."/>
            <person name="Newcombe D."/>
            <person name="Golebiewski L."/>
            <person name="Petrosino J.F."/>
            <person name="Nicholson W.L."/>
            <person name="Fox G.E."/>
            <person name="Venkateswaran K."/>
            <person name="Highlander S.K."/>
            <person name="Weinstock G.M."/>
        </authorList>
    </citation>
    <scope>NUCLEOTIDE SEQUENCE [LARGE SCALE GENOMIC DNA]</scope>
    <source>
        <strain>SAFR-032</strain>
    </source>
</reference>
<sequence length="234" mass="25860">MKHLPIIALDFPSGQEALAFLEPFEGTPLFVKVGMELFYQEGPVILEALKEKNCRIFLDLKLHDIPTTVKKAMNRLAVLGVDLVNVHAAGGKQMMQAALEGLESGTPAGQKRPDIIAVTQLTSTSEDMMRSELLIDRSLQETVIRYGQLAYESGLDGVVCSVHESKALHEHISPDFLTVTPGIRLLNDQTDDQKRVATPAYAKEQGVSQIVVGRSITKADKPLEAYHQILKEWE</sequence>
<comment type="function">
    <text evidence="1">Catalyzes the decarboxylation of orotidine 5'-monophosphate (OMP) to uridine 5'-monophosphate (UMP).</text>
</comment>
<comment type="catalytic activity">
    <reaction evidence="1">
        <text>orotidine 5'-phosphate + H(+) = UMP + CO2</text>
        <dbReference type="Rhea" id="RHEA:11596"/>
        <dbReference type="ChEBI" id="CHEBI:15378"/>
        <dbReference type="ChEBI" id="CHEBI:16526"/>
        <dbReference type="ChEBI" id="CHEBI:57538"/>
        <dbReference type="ChEBI" id="CHEBI:57865"/>
        <dbReference type="EC" id="4.1.1.23"/>
    </reaction>
</comment>
<comment type="pathway">
    <text evidence="1">Pyrimidine metabolism; UMP biosynthesis via de novo pathway; UMP from orotate: step 2/2.</text>
</comment>
<comment type="subunit">
    <text evidence="1">Homodimer.</text>
</comment>
<comment type="similarity">
    <text evidence="1">Belongs to the OMP decarboxylase family. Type 1 subfamily.</text>
</comment>
<name>PYRF_BACP2</name>
<protein>
    <recommendedName>
        <fullName evidence="1">Orotidine 5'-phosphate decarboxylase</fullName>
        <ecNumber evidence="1">4.1.1.23</ecNumber>
    </recommendedName>
    <alternativeName>
        <fullName evidence="1">OMP decarboxylase</fullName>
        <shortName evidence="1">OMPDCase</shortName>
        <shortName evidence="1">OMPdecase</shortName>
    </alternativeName>
</protein>
<organism>
    <name type="scientific">Bacillus pumilus (strain SAFR-032)</name>
    <dbReference type="NCBI Taxonomy" id="315750"/>
    <lineage>
        <taxon>Bacteria</taxon>
        <taxon>Bacillati</taxon>
        <taxon>Bacillota</taxon>
        <taxon>Bacilli</taxon>
        <taxon>Bacillales</taxon>
        <taxon>Bacillaceae</taxon>
        <taxon>Bacillus</taxon>
    </lineage>
</organism>
<accession>A8FD20</accession>
<evidence type="ECO:0000255" key="1">
    <source>
        <dbReference type="HAMAP-Rule" id="MF_01200"/>
    </source>
</evidence>
<proteinExistence type="inferred from homology"/>
<keyword id="KW-0210">Decarboxylase</keyword>
<keyword id="KW-0456">Lyase</keyword>
<keyword id="KW-0665">Pyrimidine biosynthesis</keyword>
<feature type="chain" id="PRO_1000065893" description="Orotidine 5'-phosphate decarboxylase">
    <location>
        <begin position="1"/>
        <end position="234"/>
    </location>
</feature>
<feature type="active site" description="Proton donor" evidence="1">
    <location>
        <position position="61"/>
    </location>
</feature>
<feature type="binding site" evidence="1">
    <location>
        <position position="10"/>
    </location>
    <ligand>
        <name>substrate</name>
    </ligand>
</feature>
<feature type="binding site" evidence="1">
    <location>
        <position position="32"/>
    </location>
    <ligand>
        <name>substrate</name>
    </ligand>
</feature>
<feature type="binding site" evidence="1">
    <location>
        <begin position="59"/>
        <end position="68"/>
    </location>
    <ligand>
        <name>substrate</name>
    </ligand>
</feature>
<feature type="binding site" evidence="1">
    <location>
        <position position="122"/>
    </location>
    <ligand>
        <name>substrate</name>
    </ligand>
</feature>
<feature type="binding site" evidence="1">
    <location>
        <position position="184"/>
    </location>
    <ligand>
        <name>substrate</name>
    </ligand>
</feature>
<feature type="binding site" evidence="1">
    <location>
        <position position="193"/>
    </location>
    <ligand>
        <name>substrate</name>
    </ligand>
</feature>
<feature type="binding site" evidence="1">
    <location>
        <position position="213"/>
    </location>
    <ligand>
        <name>substrate</name>
    </ligand>
</feature>
<feature type="binding site" evidence="1">
    <location>
        <position position="214"/>
    </location>
    <ligand>
        <name>substrate</name>
    </ligand>
</feature>
<dbReference type="EC" id="4.1.1.23" evidence="1"/>
<dbReference type="EMBL" id="CP000813">
    <property type="protein sequence ID" value="ABV62137.1"/>
    <property type="molecule type" value="Genomic_DNA"/>
</dbReference>
<dbReference type="RefSeq" id="WP_012009900.1">
    <property type="nucleotide sequence ID" value="NC_009848.4"/>
</dbReference>
<dbReference type="SMR" id="A8FD20"/>
<dbReference type="STRING" id="315750.BPUM_1454"/>
<dbReference type="GeneID" id="5620717"/>
<dbReference type="KEGG" id="bpu:BPUM_1454"/>
<dbReference type="eggNOG" id="COG0284">
    <property type="taxonomic scope" value="Bacteria"/>
</dbReference>
<dbReference type="HOGENOM" id="CLU_067069_1_1_9"/>
<dbReference type="OrthoDB" id="9806203at2"/>
<dbReference type="UniPathway" id="UPA00070">
    <property type="reaction ID" value="UER00120"/>
</dbReference>
<dbReference type="Proteomes" id="UP000001355">
    <property type="component" value="Chromosome"/>
</dbReference>
<dbReference type="GO" id="GO:0005829">
    <property type="term" value="C:cytosol"/>
    <property type="evidence" value="ECO:0007669"/>
    <property type="project" value="TreeGrafter"/>
</dbReference>
<dbReference type="GO" id="GO:0004590">
    <property type="term" value="F:orotidine-5'-phosphate decarboxylase activity"/>
    <property type="evidence" value="ECO:0007669"/>
    <property type="project" value="UniProtKB-UniRule"/>
</dbReference>
<dbReference type="GO" id="GO:0006207">
    <property type="term" value="P:'de novo' pyrimidine nucleobase biosynthetic process"/>
    <property type="evidence" value="ECO:0007669"/>
    <property type="project" value="InterPro"/>
</dbReference>
<dbReference type="GO" id="GO:0044205">
    <property type="term" value="P:'de novo' UMP biosynthetic process"/>
    <property type="evidence" value="ECO:0007669"/>
    <property type="project" value="UniProtKB-UniRule"/>
</dbReference>
<dbReference type="CDD" id="cd04725">
    <property type="entry name" value="OMP_decarboxylase_like"/>
    <property type="match status" value="1"/>
</dbReference>
<dbReference type="FunFam" id="3.20.20.70:FF:000015">
    <property type="entry name" value="Orotidine 5'-phosphate decarboxylase"/>
    <property type="match status" value="1"/>
</dbReference>
<dbReference type="Gene3D" id="3.20.20.70">
    <property type="entry name" value="Aldolase class I"/>
    <property type="match status" value="1"/>
</dbReference>
<dbReference type="HAMAP" id="MF_01200_B">
    <property type="entry name" value="OMPdecase_type1_B"/>
    <property type="match status" value="1"/>
</dbReference>
<dbReference type="InterPro" id="IPR013785">
    <property type="entry name" value="Aldolase_TIM"/>
</dbReference>
<dbReference type="InterPro" id="IPR014732">
    <property type="entry name" value="OMPdecase"/>
</dbReference>
<dbReference type="InterPro" id="IPR018089">
    <property type="entry name" value="OMPdecase_AS"/>
</dbReference>
<dbReference type="InterPro" id="IPR047596">
    <property type="entry name" value="OMPdecase_bac"/>
</dbReference>
<dbReference type="InterPro" id="IPR001754">
    <property type="entry name" value="OMPdeCOase_dom"/>
</dbReference>
<dbReference type="InterPro" id="IPR011060">
    <property type="entry name" value="RibuloseP-bd_barrel"/>
</dbReference>
<dbReference type="NCBIfam" id="NF001273">
    <property type="entry name" value="PRK00230.1"/>
    <property type="match status" value="1"/>
</dbReference>
<dbReference type="NCBIfam" id="TIGR01740">
    <property type="entry name" value="pyrF"/>
    <property type="match status" value="1"/>
</dbReference>
<dbReference type="PANTHER" id="PTHR32119">
    <property type="entry name" value="OROTIDINE 5'-PHOSPHATE DECARBOXYLASE"/>
    <property type="match status" value="1"/>
</dbReference>
<dbReference type="PANTHER" id="PTHR32119:SF2">
    <property type="entry name" value="OROTIDINE 5'-PHOSPHATE DECARBOXYLASE"/>
    <property type="match status" value="1"/>
</dbReference>
<dbReference type="Pfam" id="PF00215">
    <property type="entry name" value="OMPdecase"/>
    <property type="match status" value="1"/>
</dbReference>
<dbReference type="SMART" id="SM00934">
    <property type="entry name" value="OMPdecase"/>
    <property type="match status" value="1"/>
</dbReference>
<dbReference type="SUPFAM" id="SSF51366">
    <property type="entry name" value="Ribulose-phoshate binding barrel"/>
    <property type="match status" value="1"/>
</dbReference>
<dbReference type="PROSITE" id="PS00156">
    <property type="entry name" value="OMPDECASE"/>
    <property type="match status" value="1"/>
</dbReference>
<gene>
    <name evidence="1" type="primary">pyrF</name>
    <name type="ordered locus">BPUM_1454</name>
</gene>